<comment type="function">
    <text evidence="1">Specifically methylates the N4 position of cytidine in position 1402 (C1402) of 16S rRNA.</text>
</comment>
<comment type="catalytic activity">
    <reaction evidence="1">
        <text>cytidine(1402) in 16S rRNA + S-adenosyl-L-methionine = N(4)-methylcytidine(1402) in 16S rRNA + S-adenosyl-L-homocysteine + H(+)</text>
        <dbReference type="Rhea" id="RHEA:42928"/>
        <dbReference type="Rhea" id="RHEA-COMP:10286"/>
        <dbReference type="Rhea" id="RHEA-COMP:10287"/>
        <dbReference type="ChEBI" id="CHEBI:15378"/>
        <dbReference type="ChEBI" id="CHEBI:57856"/>
        <dbReference type="ChEBI" id="CHEBI:59789"/>
        <dbReference type="ChEBI" id="CHEBI:74506"/>
        <dbReference type="ChEBI" id="CHEBI:82748"/>
        <dbReference type="EC" id="2.1.1.199"/>
    </reaction>
</comment>
<comment type="subcellular location">
    <subcellularLocation>
        <location evidence="1">Cytoplasm</location>
    </subcellularLocation>
</comment>
<comment type="similarity">
    <text evidence="1">Belongs to the methyltransferase superfamily. RsmH family.</text>
</comment>
<sequence>MKRSAYHEPVLAAQVTDFLVLRPGIYIDGTLGGGGHALAIMRALETAGFEKNSLLIGIDQDDEALHAASTTLSWYKETTVLVKGNFSDVRSILGKVCKQRGLVSRAAGILLDLGVSSSQIDTAGRGFSYLQKGPLDMRMDRCSSTTAADIVNTLDEKELAGLFFRYGEEPRSRMIARHIVNYREQTGAVTGTEVLAAIIRNAERDPHKQIKTLSRVFQALRIEVNQELEVLKQALSDGVDCLDYHGRMAVISYHSLEDRIVKSFFVEKSKSDWGPKGVGMREPLHKGVLGLVTRKPLIADEKEIQENPRARSAKLRVVENVATGGSHAE</sequence>
<feature type="chain" id="PRO_0000386800" description="Ribosomal RNA small subunit methyltransferase H">
    <location>
        <begin position="1"/>
        <end position="329"/>
    </location>
</feature>
<feature type="binding site" evidence="1">
    <location>
        <begin position="34"/>
        <end position="36"/>
    </location>
    <ligand>
        <name>S-adenosyl-L-methionine</name>
        <dbReference type="ChEBI" id="CHEBI:59789"/>
    </ligand>
</feature>
<feature type="binding site" evidence="1">
    <location>
        <position position="59"/>
    </location>
    <ligand>
        <name>S-adenosyl-L-methionine</name>
        <dbReference type="ChEBI" id="CHEBI:59789"/>
    </ligand>
</feature>
<feature type="binding site" evidence="1">
    <location>
        <position position="86"/>
    </location>
    <ligand>
        <name>S-adenosyl-L-methionine</name>
        <dbReference type="ChEBI" id="CHEBI:59789"/>
    </ligand>
</feature>
<feature type="binding site" evidence="1">
    <location>
        <position position="112"/>
    </location>
    <ligand>
        <name>S-adenosyl-L-methionine</name>
        <dbReference type="ChEBI" id="CHEBI:59789"/>
    </ligand>
</feature>
<feature type="binding site" evidence="1">
    <location>
        <position position="119"/>
    </location>
    <ligand>
        <name>S-adenosyl-L-methionine</name>
        <dbReference type="ChEBI" id="CHEBI:59789"/>
    </ligand>
</feature>
<accession>A1BJY6</accession>
<reference key="1">
    <citation type="submission" date="2006-12" db="EMBL/GenBank/DDBJ databases">
        <title>Complete sequence of Chlorobium phaeobacteroides DSM 266.</title>
        <authorList>
            <consortium name="US DOE Joint Genome Institute"/>
            <person name="Copeland A."/>
            <person name="Lucas S."/>
            <person name="Lapidus A."/>
            <person name="Barry K."/>
            <person name="Detter J.C."/>
            <person name="Glavina del Rio T."/>
            <person name="Hammon N."/>
            <person name="Israni S."/>
            <person name="Pitluck S."/>
            <person name="Goltsman E."/>
            <person name="Schmutz J."/>
            <person name="Larimer F."/>
            <person name="Land M."/>
            <person name="Hauser L."/>
            <person name="Mikhailova N."/>
            <person name="Li T."/>
            <person name="Overmann J."/>
            <person name="Bryant D.A."/>
            <person name="Richardson P."/>
        </authorList>
    </citation>
    <scope>NUCLEOTIDE SEQUENCE [LARGE SCALE GENOMIC DNA]</scope>
    <source>
        <strain>DSM 266 / SMG 266 / 2430</strain>
    </source>
</reference>
<gene>
    <name evidence="1" type="primary">rsmH</name>
    <name type="synonym">mraW</name>
    <name type="ordered locus">Cpha266_2729</name>
</gene>
<organism>
    <name type="scientific">Chlorobium phaeobacteroides (strain DSM 266 / SMG 266 / 2430)</name>
    <dbReference type="NCBI Taxonomy" id="290317"/>
    <lineage>
        <taxon>Bacteria</taxon>
        <taxon>Pseudomonadati</taxon>
        <taxon>Chlorobiota</taxon>
        <taxon>Chlorobiia</taxon>
        <taxon>Chlorobiales</taxon>
        <taxon>Chlorobiaceae</taxon>
        <taxon>Chlorobium/Pelodictyon group</taxon>
        <taxon>Chlorobium</taxon>
    </lineage>
</organism>
<name>RSMH_CHLPD</name>
<protein>
    <recommendedName>
        <fullName evidence="1">Ribosomal RNA small subunit methyltransferase H</fullName>
        <ecNumber evidence="1">2.1.1.199</ecNumber>
    </recommendedName>
    <alternativeName>
        <fullName evidence="1">16S rRNA m(4)C1402 methyltransferase</fullName>
    </alternativeName>
    <alternativeName>
        <fullName evidence="1">rRNA (cytosine-N(4)-)-methyltransferase RsmH</fullName>
    </alternativeName>
</protein>
<proteinExistence type="inferred from homology"/>
<dbReference type="EC" id="2.1.1.199" evidence="1"/>
<dbReference type="EMBL" id="CP000492">
    <property type="protein sequence ID" value="ABL66713.1"/>
    <property type="molecule type" value="Genomic_DNA"/>
</dbReference>
<dbReference type="RefSeq" id="WP_015961240.1">
    <property type="nucleotide sequence ID" value="NC_008639.1"/>
</dbReference>
<dbReference type="SMR" id="A1BJY6"/>
<dbReference type="STRING" id="290317.Cpha266_2729"/>
<dbReference type="KEGG" id="cph:Cpha266_2729"/>
<dbReference type="eggNOG" id="COG0275">
    <property type="taxonomic scope" value="Bacteria"/>
</dbReference>
<dbReference type="HOGENOM" id="CLU_038422_3_0_10"/>
<dbReference type="OrthoDB" id="9806637at2"/>
<dbReference type="Proteomes" id="UP000008701">
    <property type="component" value="Chromosome"/>
</dbReference>
<dbReference type="GO" id="GO:0005737">
    <property type="term" value="C:cytoplasm"/>
    <property type="evidence" value="ECO:0007669"/>
    <property type="project" value="UniProtKB-SubCell"/>
</dbReference>
<dbReference type="GO" id="GO:0071424">
    <property type="term" value="F:rRNA (cytosine-N4-)-methyltransferase activity"/>
    <property type="evidence" value="ECO:0007669"/>
    <property type="project" value="UniProtKB-UniRule"/>
</dbReference>
<dbReference type="GO" id="GO:0070475">
    <property type="term" value="P:rRNA base methylation"/>
    <property type="evidence" value="ECO:0007669"/>
    <property type="project" value="UniProtKB-UniRule"/>
</dbReference>
<dbReference type="Gene3D" id="1.10.150.170">
    <property type="entry name" value="Putative methyltransferase TM0872, insert domain"/>
    <property type="match status" value="1"/>
</dbReference>
<dbReference type="Gene3D" id="3.40.50.150">
    <property type="entry name" value="Vaccinia Virus protein VP39"/>
    <property type="match status" value="1"/>
</dbReference>
<dbReference type="HAMAP" id="MF_01007">
    <property type="entry name" value="16SrRNA_methyltr_H"/>
    <property type="match status" value="1"/>
</dbReference>
<dbReference type="InterPro" id="IPR002903">
    <property type="entry name" value="RsmH"/>
</dbReference>
<dbReference type="InterPro" id="IPR023397">
    <property type="entry name" value="SAM-dep_MeTrfase_MraW_recog"/>
</dbReference>
<dbReference type="InterPro" id="IPR029063">
    <property type="entry name" value="SAM-dependent_MTases_sf"/>
</dbReference>
<dbReference type="NCBIfam" id="TIGR00006">
    <property type="entry name" value="16S rRNA (cytosine(1402)-N(4))-methyltransferase RsmH"/>
    <property type="match status" value="1"/>
</dbReference>
<dbReference type="PANTHER" id="PTHR11265:SF0">
    <property type="entry name" value="12S RRNA N4-METHYLCYTIDINE METHYLTRANSFERASE"/>
    <property type="match status" value="1"/>
</dbReference>
<dbReference type="PANTHER" id="PTHR11265">
    <property type="entry name" value="S-ADENOSYL-METHYLTRANSFERASE MRAW"/>
    <property type="match status" value="1"/>
</dbReference>
<dbReference type="Pfam" id="PF01795">
    <property type="entry name" value="Methyltransf_5"/>
    <property type="match status" value="1"/>
</dbReference>
<dbReference type="PIRSF" id="PIRSF004486">
    <property type="entry name" value="MraW"/>
    <property type="match status" value="1"/>
</dbReference>
<dbReference type="SUPFAM" id="SSF81799">
    <property type="entry name" value="Putative methyltransferase TM0872, insert domain"/>
    <property type="match status" value="1"/>
</dbReference>
<dbReference type="SUPFAM" id="SSF53335">
    <property type="entry name" value="S-adenosyl-L-methionine-dependent methyltransferases"/>
    <property type="match status" value="1"/>
</dbReference>
<evidence type="ECO:0000255" key="1">
    <source>
        <dbReference type="HAMAP-Rule" id="MF_01007"/>
    </source>
</evidence>
<keyword id="KW-0963">Cytoplasm</keyword>
<keyword id="KW-0489">Methyltransferase</keyword>
<keyword id="KW-1185">Reference proteome</keyword>
<keyword id="KW-0698">rRNA processing</keyword>
<keyword id="KW-0949">S-adenosyl-L-methionine</keyword>
<keyword id="KW-0808">Transferase</keyword>